<protein>
    <recommendedName>
        <fullName>Inactive dihydropteroate synthase 2</fullName>
        <shortName>DHPS 2</shortName>
    </recommendedName>
    <alternativeName>
        <fullName>Dihydropteroate pyrophosphorylase 2</fullName>
    </alternativeName>
</protein>
<keyword id="KW-1185">Reference proteome</keyword>
<gene>
    <name type="primary">folP2</name>
    <name type="ordered locus">MT1245</name>
</gene>
<comment type="function">
    <text evidence="1">Has very low affinity for the DHPS substrate 6-hydroxymethyl-7,8-dihydropterin-pyrophosphate, but can bind the inhibitor dapsone. Seems to lack dihydropteroate synthase activity, and does probably not function in folate metabolism (By similarity).</text>
</comment>
<comment type="subunit">
    <text evidence="1">Homodimer.</text>
</comment>
<comment type="similarity">
    <text evidence="4">Belongs to the DHPS family.</text>
</comment>
<comment type="caution">
    <text evidence="4">A histidine residue in the pterin-binding domain interferes with substrate binding, and seems to be responsible for abolishing dihydropteroate synthase activity.</text>
</comment>
<dbReference type="EMBL" id="AE000516">
    <property type="protein sequence ID" value="AAK45502.1"/>
    <property type="molecule type" value="Genomic_DNA"/>
</dbReference>
<dbReference type="PIR" id="E70609">
    <property type="entry name" value="E70609"/>
</dbReference>
<dbReference type="SMR" id="P9WNC8"/>
<dbReference type="KEGG" id="mtc:MT1245"/>
<dbReference type="PATRIC" id="fig|83331.31.peg.1346"/>
<dbReference type="HOGENOM" id="CLU_008023_0_0_11"/>
<dbReference type="Proteomes" id="UP000001020">
    <property type="component" value="Chromosome"/>
</dbReference>
<dbReference type="GO" id="GO:0005829">
    <property type="term" value="C:cytosol"/>
    <property type="evidence" value="ECO:0007669"/>
    <property type="project" value="TreeGrafter"/>
</dbReference>
<dbReference type="GO" id="GO:0004156">
    <property type="term" value="F:dihydropteroate synthase activity"/>
    <property type="evidence" value="ECO:0007669"/>
    <property type="project" value="InterPro"/>
</dbReference>
<dbReference type="GO" id="GO:0009396">
    <property type="term" value="P:folic acid-containing compound biosynthetic process"/>
    <property type="evidence" value="ECO:0007669"/>
    <property type="project" value="InterPro"/>
</dbReference>
<dbReference type="CDD" id="cd00739">
    <property type="entry name" value="DHPS"/>
    <property type="match status" value="1"/>
</dbReference>
<dbReference type="FunFam" id="3.20.20.20:FF:000008">
    <property type="entry name" value="Dihydropteroate synthase"/>
    <property type="match status" value="1"/>
</dbReference>
<dbReference type="Gene3D" id="3.20.20.20">
    <property type="entry name" value="Dihydropteroate synthase-like"/>
    <property type="match status" value="1"/>
</dbReference>
<dbReference type="InterPro" id="IPR045031">
    <property type="entry name" value="DHP_synth-like"/>
</dbReference>
<dbReference type="InterPro" id="IPR006390">
    <property type="entry name" value="DHP_synth_dom"/>
</dbReference>
<dbReference type="InterPro" id="IPR011005">
    <property type="entry name" value="Dihydropteroate_synth-like_sf"/>
</dbReference>
<dbReference type="InterPro" id="IPR000489">
    <property type="entry name" value="Pterin-binding_dom"/>
</dbReference>
<dbReference type="NCBIfam" id="TIGR01496">
    <property type="entry name" value="DHPS"/>
    <property type="match status" value="1"/>
</dbReference>
<dbReference type="PANTHER" id="PTHR20941">
    <property type="entry name" value="FOLATE SYNTHESIS PROTEINS"/>
    <property type="match status" value="1"/>
</dbReference>
<dbReference type="PANTHER" id="PTHR20941:SF8">
    <property type="entry name" value="INACTIVE DIHYDROPTEROATE SYNTHASE 2"/>
    <property type="match status" value="1"/>
</dbReference>
<dbReference type="Pfam" id="PF00809">
    <property type="entry name" value="Pterin_bind"/>
    <property type="match status" value="1"/>
</dbReference>
<dbReference type="SUPFAM" id="SSF51717">
    <property type="entry name" value="Dihydropteroate synthetase-like"/>
    <property type="match status" value="1"/>
</dbReference>
<dbReference type="PROSITE" id="PS00792">
    <property type="entry name" value="DHPS_1"/>
    <property type="match status" value="1"/>
</dbReference>
<dbReference type="PROSITE" id="PS00793">
    <property type="entry name" value="DHPS_2"/>
    <property type="match status" value="1"/>
</dbReference>
<dbReference type="PROSITE" id="PS50972">
    <property type="entry name" value="PTERIN_BINDING"/>
    <property type="match status" value="1"/>
</dbReference>
<name>DHPS2_MYCTO</name>
<reference key="1">
    <citation type="journal article" date="2002" name="J. Bacteriol.">
        <title>Whole-genome comparison of Mycobacterium tuberculosis clinical and laboratory strains.</title>
        <authorList>
            <person name="Fleischmann R.D."/>
            <person name="Alland D."/>
            <person name="Eisen J.A."/>
            <person name="Carpenter L."/>
            <person name="White O."/>
            <person name="Peterson J.D."/>
            <person name="DeBoy R.T."/>
            <person name="Dodson R.J."/>
            <person name="Gwinn M.L."/>
            <person name="Haft D.H."/>
            <person name="Hickey E.K."/>
            <person name="Kolonay J.F."/>
            <person name="Nelson W.C."/>
            <person name="Umayam L.A."/>
            <person name="Ermolaeva M.D."/>
            <person name="Salzberg S.L."/>
            <person name="Delcher A."/>
            <person name="Utterback T.R."/>
            <person name="Weidman J.F."/>
            <person name="Khouri H.M."/>
            <person name="Gill J."/>
            <person name="Mikula A."/>
            <person name="Bishai W."/>
            <person name="Jacobs W.R. Jr."/>
            <person name="Venter J.C."/>
            <person name="Fraser C.M."/>
        </authorList>
    </citation>
    <scope>NUCLEOTIDE SEQUENCE [LARGE SCALE GENOMIC DNA]</scope>
    <source>
        <strain>CDC 1551 / Oshkosh</strain>
    </source>
</reference>
<evidence type="ECO:0000250" key="1"/>
<evidence type="ECO:0000255" key="2">
    <source>
        <dbReference type="PROSITE-ProRule" id="PRU00334"/>
    </source>
</evidence>
<evidence type="ECO:0000256" key="3">
    <source>
        <dbReference type="SAM" id="MobiDB-lite"/>
    </source>
</evidence>
<evidence type="ECO:0000305" key="4"/>
<sequence>MRSTPPASAGRSTPPALAGHSTPPALAGHSTLCGRPVAGDRALIMAIVNRTPDSFYDKGATFSDAAARDAVHRAVADGADVIDVGGVKAGPGERVDVDTEITRLVPFIEWLRGAYPDQLISVDTWRAQVAKAACAAGADLINDTWGGVDPAMPEVAAEFGAGLVCAHTGGALPRTRPFRVSYGTTTRGVVDAVISQVTAAAERAVAAGVAREKVLIDPAHDFGKNTFHGLLLLRHVADLVMTGWPVLMALSNKDVVGETLGVDLTERLEGTLAATALAAAAGARMFRVHEVAATRRVLEMVASIQGVRPPTRTVRGLA</sequence>
<feature type="chain" id="PRO_0000427149" description="Inactive dihydropteroate synthase 2">
    <location>
        <begin position="1"/>
        <end position="318"/>
    </location>
</feature>
<feature type="domain" description="Pterin-binding" evidence="2">
    <location>
        <begin position="42"/>
        <end position="299"/>
    </location>
</feature>
<feature type="region of interest" description="Disordered" evidence="3">
    <location>
        <begin position="1"/>
        <end position="25"/>
    </location>
</feature>
<feature type="site" description="Characteristic for family members without dihydropteroate synthase activity" evidence="1">
    <location>
        <position position="220"/>
    </location>
</feature>
<proteinExistence type="inferred from homology"/>
<organism>
    <name type="scientific">Mycobacterium tuberculosis (strain CDC 1551 / Oshkosh)</name>
    <dbReference type="NCBI Taxonomy" id="83331"/>
    <lineage>
        <taxon>Bacteria</taxon>
        <taxon>Bacillati</taxon>
        <taxon>Actinomycetota</taxon>
        <taxon>Actinomycetes</taxon>
        <taxon>Mycobacteriales</taxon>
        <taxon>Mycobacteriaceae</taxon>
        <taxon>Mycobacterium</taxon>
        <taxon>Mycobacterium tuberculosis complex</taxon>
    </lineage>
</organism>
<accession>P9WNC8</accession>
<accession>L0T8Y8</accession>
<accession>O05308</accession>
<accession>P64139</accession>